<organism>
    <name type="scientific">Clostridium kluyveri (strain NBRC 12016)</name>
    <dbReference type="NCBI Taxonomy" id="583346"/>
    <lineage>
        <taxon>Bacteria</taxon>
        <taxon>Bacillati</taxon>
        <taxon>Bacillota</taxon>
        <taxon>Clostridia</taxon>
        <taxon>Eubacteriales</taxon>
        <taxon>Clostridiaceae</taxon>
        <taxon>Clostridium</taxon>
    </lineage>
</organism>
<feature type="chain" id="PRO_1000184013" description="Large ribosomal subunit protein bL17">
    <location>
        <begin position="1"/>
        <end position="113"/>
    </location>
</feature>
<dbReference type="EMBL" id="AP009049">
    <property type="protein sequence ID" value="BAH05263.1"/>
    <property type="molecule type" value="Genomic_DNA"/>
</dbReference>
<dbReference type="RefSeq" id="WP_011988832.1">
    <property type="nucleotide sequence ID" value="NC_011837.1"/>
</dbReference>
<dbReference type="SMR" id="B9DYD8"/>
<dbReference type="KEGG" id="ckr:CKR_0212"/>
<dbReference type="HOGENOM" id="CLU_074407_2_2_9"/>
<dbReference type="Proteomes" id="UP000007969">
    <property type="component" value="Chromosome"/>
</dbReference>
<dbReference type="GO" id="GO:0022625">
    <property type="term" value="C:cytosolic large ribosomal subunit"/>
    <property type="evidence" value="ECO:0007669"/>
    <property type="project" value="TreeGrafter"/>
</dbReference>
<dbReference type="GO" id="GO:0003735">
    <property type="term" value="F:structural constituent of ribosome"/>
    <property type="evidence" value="ECO:0007669"/>
    <property type="project" value="InterPro"/>
</dbReference>
<dbReference type="GO" id="GO:0006412">
    <property type="term" value="P:translation"/>
    <property type="evidence" value="ECO:0007669"/>
    <property type="project" value="UniProtKB-UniRule"/>
</dbReference>
<dbReference type="FunFam" id="3.90.1030.10:FF:000001">
    <property type="entry name" value="50S ribosomal protein L17"/>
    <property type="match status" value="1"/>
</dbReference>
<dbReference type="Gene3D" id="3.90.1030.10">
    <property type="entry name" value="Ribosomal protein L17"/>
    <property type="match status" value="1"/>
</dbReference>
<dbReference type="HAMAP" id="MF_01368">
    <property type="entry name" value="Ribosomal_bL17"/>
    <property type="match status" value="1"/>
</dbReference>
<dbReference type="InterPro" id="IPR000456">
    <property type="entry name" value="Ribosomal_bL17"/>
</dbReference>
<dbReference type="InterPro" id="IPR047859">
    <property type="entry name" value="Ribosomal_bL17_CS"/>
</dbReference>
<dbReference type="InterPro" id="IPR036373">
    <property type="entry name" value="Ribosomal_bL17_sf"/>
</dbReference>
<dbReference type="NCBIfam" id="TIGR00059">
    <property type="entry name" value="L17"/>
    <property type="match status" value="1"/>
</dbReference>
<dbReference type="PANTHER" id="PTHR14413:SF16">
    <property type="entry name" value="LARGE RIBOSOMAL SUBUNIT PROTEIN BL17M"/>
    <property type="match status" value="1"/>
</dbReference>
<dbReference type="PANTHER" id="PTHR14413">
    <property type="entry name" value="RIBOSOMAL PROTEIN L17"/>
    <property type="match status" value="1"/>
</dbReference>
<dbReference type="Pfam" id="PF01196">
    <property type="entry name" value="Ribosomal_L17"/>
    <property type="match status" value="1"/>
</dbReference>
<dbReference type="SUPFAM" id="SSF64263">
    <property type="entry name" value="Prokaryotic ribosomal protein L17"/>
    <property type="match status" value="1"/>
</dbReference>
<dbReference type="PROSITE" id="PS01167">
    <property type="entry name" value="RIBOSOMAL_L17"/>
    <property type="match status" value="1"/>
</dbReference>
<protein>
    <recommendedName>
        <fullName evidence="1">Large ribosomal subunit protein bL17</fullName>
    </recommendedName>
    <alternativeName>
        <fullName evidence="2">50S ribosomal protein L17</fullName>
    </alternativeName>
</protein>
<sequence>MAQHRKLGLPSDHRRAMLRNLVTSFLKHGKIQTTVTRAKEARSLAEKMITLAKRGDLHARRQVLSFVTEEEVVKNLFTNIAPKYAERNGGYTRMYKIGPRRGDGAELVILELV</sequence>
<accession>B9DYD8</accession>
<proteinExistence type="inferred from homology"/>
<evidence type="ECO:0000255" key="1">
    <source>
        <dbReference type="HAMAP-Rule" id="MF_01368"/>
    </source>
</evidence>
<evidence type="ECO:0000305" key="2"/>
<name>RL17_CLOK1</name>
<reference key="1">
    <citation type="submission" date="2005-09" db="EMBL/GenBank/DDBJ databases">
        <title>Complete genome sequence of Clostridium kluyveri and comparative genomics of Clostridia species.</title>
        <authorList>
            <person name="Inui M."/>
            <person name="Nonaka H."/>
            <person name="Shinoda Y."/>
            <person name="Ikenaga Y."/>
            <person name="Abe M."/>
            <person name="Naito K."/>
            <person name="Vertes A.A."/>
            <person name="Yukawa H."/>
        </authorList>
    </citation>
    <scope>NUCLEOTIDE SEQUENCE [LARGE SCALE GENOMIC DNA]</scope>
    <source>
        <strain>NBRC 12016</strain>
    </source>
</reference>
<comment type="subunit">
    <text evidence="1">Part of the 50S ribosomal subunit. Contacts protein L32.</text>
</comment>
<comment type="similarity">
    <text evidence="1">Belongs to the bacterial ribosomal protein bL17 family.</text>
</comment>
<keyword id="KW-0687">Ribonucleoprotein</keyword>
<keyword id="KW-0689">Ribosomal protein</keyword>
<gene>
    <name evidence="1" type="primary">rplQ</name>
    <name type="ordered locus">CKR_0212</name>
</gene>